<feature type="peptide" id="PRO_0000421554" description="Extended FMRFamide-12" evidence="3">
    <location>
        <begin position="1"/>
        <end position="15"/>
    </location>
</feature>
<feature type="modified residue" description="Phenylalanine amide" evidence="3">
    <location>
        <position position="15"/>
    </location>
</feature>
<feature type="unsure residue" description="L or I" evidence="3">
    <location>
        <position position="4"/>
    </location>
</feature>
<feature type="unsure residue" description="L or I" evidence="3">
    <location>
        <position position="13"/>
    </location>
</feature>
<sequence length="15" mass="1790">SPALDDEHNDNFLRF</sequence>
<keyword id="KW-0027">Amidation</keyword>
<keyword id="KW-0903">Direct protein sequencing</keyword>
<keyword id="KW-0527">Neuropeptide</keyword>
<keyword id="KW-0964">Secreted</keyword>
<name>FAR12_AUSGA</name>
<reference evidence="5" key="1">
    <citation type="journal article" date="2012" name="Syst. Biol.">
        <title>Peptidomics-based phylogeny and biogeography of Mantophasmatodea (Hexapoda).</title>
        <authorList>
            <person name="Predel R."/>
            <person name="Neupert S."/>
            <person name="Huetteroth W."/>
            <person name="Kahnt J."/>
            <person name="Waidelich D."/>
            <person name="Roth S."/>
        </authorList>
    </citation>
    <scope>PROTEIN SEQUENCE</scope>
    <scope>AMIDATION AT PHE-15</scope>
    <source>
        <tissue evidence="3">Thoracic perisympathetic organs</tissue>
    </source>
</reference>
<protein>
    <recommendedName>
        <fullName evidence="4">Extended FMRFamide-12</fullName>
        <shortName evidence="4">FMRFa-12</shortName>
    </recommendedName>
</protein>
<comment type="function">
    <text evidence="1">FMRFamides and FMRFamide-like peptides are neuropeptides.</text>
</comment>
<comment type="subcellular location">
    <subcellularLocation>
        <location evidence="6">Secreted</location>
    </subcellularLocation>
</comment>
<comment type="similarity">
    <text evidence="2">Belongs to the FARP (FMRF amide related peptide) family.</text>
</comment>
<dbReference type="GO" id="GO:0005576">
    <property type="term" value="C:extracellular region"/>
    <property type="evidence" value="ECO:0007669"/>
    <property type="project" value="UniProtKB-SubCell"/>
</dbReference>
<dbReference type="GO" id="GO:0007218">
    <property type="term" value="P:neuropeptide signaling pathway"/>
    <property type="evidence" value="ECO:0007669"/>
    <property type="project" value="UniProtKB-KW"/>
</dbReference>
<accession>B3A0E8</accession>
<organism>
    <name type="scientific">Austrophasma gansbaaiense</name>
    <name type="common">Gladiator</name>
    <name type="synonym">Heel-walker</name>
    <dbReference type="NCBI Taxonomy" id="253136"/>
    <lineage>
        <taxon>Eukaryota</taxon>
        <taxon>Metazoa</taxon>
        <taxon>Ecdysozoa</taxon>
        <taxon>Arthropoda</taxon>
        <taxon>Hexapoda</taxon>
        <taxon>Insecta</taxon>
        <taxon>Pterygota</taxon>
        <taxon>Neoptera</taxon>
        <taxon>Polyneoptera</taxon>
        <taxon>Mantophasmatodea</taxon>
        <taxon>Austrophasmatidae</taxon>
        <taxon>Austrophasma</taxon>
    </lineage>
</organism>
<proteinExistence type="evidence at protein level"/>
<evidence type="ECO:0000250" key="1">
    <source>
        <dbReference type="UniProtKB" id="P34405"/>
    </source>
</evidence>
<evidence type="ECO:0000255" key="2"/>
<evidence type="ECO:0000269" key="3">
    <source>
    </source>
</evidence>
<evidence type="ECO:0000303" key="4">
    <source>
    </source>
</evidence>
<evidence type="ECO:0000305" key="5"/>
<evidence type="ECO:0000305" key="6">
    <source>
    </source>
</evidence>